<protein>
    <recommendedName>
        <fullName evidence="7">Probable serine/threonine-protein kinase SIS8</fullName>
        <ecNumber evidence="7">2.7.11.1</ecNumber>
    </recommendedName>
    <alternativeName>
        <fullName evidence="7">MAPKK kinase SIS8</fullName>
    </alternativeName>
    <alternativeName>
        <fullName evidence="6">Protein SUGAR INSENSITIVE 8</fullName>
    </alternativeName>
</protein>
<name>SIS8_ARATH</name>
<evidence type="ECO:0000255" key="1">
    <source>
        <dbReference type="PROSITE-ProRule" id="PRU00159"/>
    </source>
</evidence>
<evidence type="ECO:0000256" key="2">
    <source>
        <dbReference type="SAM" id="MobiDB-lite"/>
    </source>
</evidence>
<evidence type="ECO:0000269" key="3">
    <source>
    </source>
</evidence>
<evidence type="ECO:0000269" key="4">
    <source>
    </source>
</evidence>
<evidence type="ECO:0000303" key="5">
    <source>
    </source>
</evidence>
<evidence type="ECO:0000303" key="6">
    <source>
    </source>
</evidence>
<evidence type="ECO:0000305" key="7"/>
<evidence type="ECO:0000312" key="8">
    <source>
        <dbReference type="Araport" id="AT1G73660"/>
    </source>
</evidence>
<evidence type="ECO:0000312" key="9">
    <source>
        <dbReference type="EMBL" id="AAG52069.1"/>
    </source>
</evidence>
<proteinExistence type="evidence at protein level"/>
<comment type="function">
    <text evidence="3 4">Acts as a negative regulator of salt tolerance (PubMed:18299802). Mediates sugar response during early seedling development (PubMed:24320620).</text>
</comment>
<comment type="catalytic activity">
    <reaction evidence="7">
        <text>L-seryl-[protein] + ATP = O-phospho-L-seryl-[protein] + ADP + H(+)</text>
        <dbReference type="Rhea" id="RHEA:17989"/>
        <dbReference type="Rhea" id="RHEA-COMP:9863"/>
        <dbReference type="Rhea" id="RHEA-COMP:11604"/>
        <dbReference type="ChEBI" id="CHEBI:15378"/>
        <dbReference type="ChEBI" id="CHEBI:29999"/>
        <dbReference type="ChEBI" id="CHEBI:30616"/>
        <dbReference type="ChEBI" id="CHEBI:83421"/>
        <dbReference type="ChEBI" id="CHEBI:456216"/>
        <dbReference type="EC" id="2.7.11.1"/>
    </reaction>
</comment>
<comment type="catalytic activity">
    <reaction evidence="7">
        <text>L-threonyl-[protein] + ATP = O-phospho-L-threonyl-[protein] + ADP + H(+)</text>
        <dbReference type="Rhea" id="RHEA:46608"/>
        <dbReference type="Rhea" id="RHEA-COMP:11060"/>
        <dbReference type="Rhea" id="RHEA-COMP:11605"/>
        <dbReference type="ChEBI" id="CHEBI:15378"/>
        <dbReference type="ChEBI" id="CHEBI:30013"/>
        <dbReference type="ChEBI" id="CHEBI:30616"/>
        <dbReference type="ChEBI" id="CHEBI:61977"/>
        <dbReference type="ChEBI" id="CHEBI:456216"/>
        <dbReference type="EC" id="2.7.11.1"/>
    </reaction>
</comment>
<comment type="subunit">
    <text evidence="4">Interacts with UGT72E1.</text>
</comment>
<comment type="subcellular location">
    <subcellularLocation>
        <location evidence="4">Nucleus</location>
    </subcellularLocation>
    <text evidence="4">Colocalizes with UGT72E1 in the nucleus.</text>
</comment>
<comment type="tissue specificity">
    <text evidence="3">Expressed roots, rosette and cauline leaves, and at lower levels in flowers and siliques.</text>
</comment>
<comment type="induction">
    <text evidence="3">Down-regulated by salt treatment.</text>
</comment>
<comment type="disruption phenotype">
    <text evidence="3 4">No visible phenotype under normal growth conditions, but mutant plants exhibit increased tolerance to salt stress during germination (PubMed:18299802). No visible phenotype under normal growth conditions, but mutant plants display a sugar-resistant seedling development phenotype (PubMed:24320620).</text>
</comment>
<comment type="similarity">
    <text evidence="1">Belongs to the protein kinase superfamily. Ser/Thr protein kinase family.</text>
</comment>
<reference key="1">
    <citation type="journal article" date="2000" name="Nature">
        <title>Sequence and analysis of chromosome 1 of the plant Arabidopsis thaliana.</title>
        <authorList>
            <person name="Theologis A."/>
            <person name="Ecker J.R."/>
            <person name="Palm C.J."/>
            <person name="Federspiel N.A."/>
            <person name="Kaul S."/>
            <person name="White O."/>
            <person name="Alonso J."/>
            <person name="Altafi H."/>
            <person name="Araujo R."/>
            <person name="Bowman C.L."/>
            <person name="Brooks S.Y."/>
            <person name="Buehler E."/>
            <person name="Chan A."/>
            <person name="Chao Q."/>
            <person name="Chen H."/>
            <person name="Cheuk R.F."/>
            <person name="Chin C.W."/>
            <person name="Chung M.K."/>
            <person name="Conn L."/>
            <person name="Conway A.B."/>
            <person name="Conway A.R."/>
            <person name="Creasy T.H."/>
            <person name="Dewar K."/>
            <person name="Dunn P."/>
            <person name="Etgu P."/>
            <person name="Feldblyum T.V."/>
            <person name="Feng J.-D."/>
            <person name="Fong B."/>
            <person name="Fujii C.Y."/>
            <person name="Gill J.E."/>
            <person name="Goldsmith A.D."/>
            <person name="Haas B."/>
            <person name="Hansen N.F."/>
            <person name="Hughes B."/>
            <person name="Huizar L."/>
            <person name="Hunter J.L."/>
            <person name="Jenkins J."/>
            <person name="Johnson-Hopson C."/>
            <person name="Khan S."/>
            <person name="Khaykin E."/>
            <person name="Kim C.J."/>
            <person name="Koo H.L."/>
            <person name="Kremenetskaia I."/>
            <person name="Kurtz D.B."/>
            <person name="Kwan A."/>
            <person name="Lam B."/>
            <person name="Langin-Hooper S."/>
            <person name="Lee A."/>
            <person name="Lee J.M."/>
            <person name="Lenz C.A."/>
            <person name="Li J.H."/>
            <person name="Li Y.-P."/>
            <person name="Lin X."/>
            <person name="Liu S.X."/>
            <person name="Liu Z.A."/>
            <person name="Luros J.S."/>
            <person name="Maiti R."/>
            <person name="Marziali A."/>
            <person name="Militscher J."/>
            <person name="Miranda M."/>
            <person name="Nguyen M."/>
            <person name="Nierman W.C."/>
            <person name="Osborne B.I."/>
            <person name="Pai G."/>
            <person name="Peterson J."/>
            <person name="Pham P.K."/>
            <person name="Rizzo M."/>
            <person name="Rooney T."/>
            <person name="Rowley D."/>
            <person name="Sakano H."/>
            <person name="Salzberg S.L."/>
            <person name="Schwartz J.R."/>
            <person name="Shinn P."/>
            <person name="Southwick A.M."/>
            <person name="Sun H."/>
            <person name="Tallon L.J."/>
            <person name="Tambunga G."/>
            <person name="Toriumi M.J."/>
            <person name="Town C.D."/>
            <person name="Utterback T."/>
            <person name="Van Aken S."/>
            <person name="Vaysberg M."/>
            <person name="Vysotskaia V.S."/>
            <person name="Walker M."/>
            <person name="Wu D."/>
            <person name="Yu G."/>
            <person name="Fraser C.M."/>
            <person name="Venter J.C."/>
            <person name="Davis R.W."/>
        </authorList>
    </citation>
    <scope>NUCLEOTIDE SEQUENCE [LARGE SCALE GENOMIC DNA]</scope>
    <source>
        <strain>cv. Columbia</strain>
    </source>
</reference>
<reference key="2">
    <citation type="journal article" date="2017" name="Plant J.">
        <title>Araport11: a complete reannotation of the Arabidopsis thaliana reference genome.</title>
        <authorList>
            <person name="Cheng C.Y."/>
            <person name="Krishnakumar V."/>
            <person name="Chan A.P."/>
            <person name="Thibaud-Nissen F."/>
            <person name="Schobel S."/>
            <person name="Town C.D."/>
        </authorList>
    </citation>
    <scope>GENOME REANNOTATION</scope>
    <source>
        <strain>cv. Columbia</strain>
    </source>
</reference>
<reference key="3">
    <citation type="journal article" date="2003" name="Science">
        <title>Empirical analysis of transcriptional activity in the Arabidopsis genome.</title>
        <authorList>
            <person name="Yamada K."/>
            <person name="Lim J."/>
            <person name="Dale J.M."/>
            <person name="Chen H."/>
            <person name="Shinn P."/>
            <person name="Palm C.J."/>
            <person name="Southwick A.M."/>
            <person name="Wu H.C."/>
            <person name="Kim C.J."/>
            <person name="Nguyen M."/>
            <person name="Pham P.K."/>
            <person name="Cheuk R.F."/>
            <person name="Karlin-Newmann G."/>
            <person name="Liu S.X."/>
            <person name="Lam B."/>
            <person name="Sakano H."/>
            <person name="Wu T."/>
            <person name="Yu G."/>
            <person name="Miranda M."/>
            <person name="Quach H.L."/>
            <person name="Tripp M."/>
            <person name="Chang C.H."/>
            <person name="Lee J.M."/>
            <person name="Toriumi M.J."/>
            <person name="Chan M.M."/>
            <person name="Tang C.C."/>
            <person name="Onodera C.S."/>
            <person name="Deng J.M."/>
            <person name="Akiyama K."/>
            <person name="Ansari Y."/>
            <person name="Arakawa T."/>
            <person name="Banh J."/>
            <person name="Banno F."/>
            <person name="Bowser L."/>
            <person name="Brooks S.Y."/>
            <person name="Carninci P."/>
            <person name="Chao Q."/>
            <person name="Choy N."/>
            <person name="Enju A."/>
            <person name="Goldsmith A.D."/>
            <person name="Gurjal M."/>
            <person name="Hansen N.F."/>
            <person name="Hayashizaki Y."/>
            <person name="Johnson-Hopson C."/>
            <person name="Hsuan V.W."/>
            <person name="Iida K."/>
            <person name="Karnes M."/>
            <person name="Khan S."/>
            <person name="Koesema E."/>
            <person name="Ishida J."/>
            <person name="Jiang P.X."/>
            <person name="Jones T."/>
            <person name="Kawai J."/>
            <person name="Kamiya A."/>
            <person name="Meyers C."/>
            <person name="Nakajima M."/>
            <person name="Narusaka M."/>
            <person name="Seki M."/>
            <person name="Sakurai T."/>
            <person name="Satou M."/>
            <person name="Tamse R."/>
            <person name="Vaysberg M."/>
            <person name="Wallender E.K."/>
            <person name="Wong C."/>
            <person name="Yamamura Y."/>
            <person name="Yuan S."/>
            <person name="Shinozaki K."/>
            <person name="Davis R.W."/>
            <person name="Theologis A."/>
            <person name="Ecker J.R."/>
        </authorList>
    </citation>
    <scope>NUCLEOTIDE SEQUENCE [LARGE SCALE MRNA]</scope>
    <source>
        <strain>cv. Columbia</strain>
    </source>
</reference>
<reference key="4">
    <citation type="submission" date="2006-07" db="EMBL/GenBank/DDBJ databases">
        <title>Large-scale analysis of RIKEN Arabidopsis full-length (RAFL) cDNAs.</title>
        <authorList>
            <person name="Totoki Y."/>
            <person name="Seki M."/>
            <person name="Ishida J."/>
            <person name="Nakajima M."/>
            <person name="Enju A."/>
            <person name="Kamiya A."/>
            <person name="Narusaka M."/>
            <person name="Shin-i T."/>
            <person name="Nakagawa M."/>
            <person name="Sakamoto N."/>
            <person name="Oishi K."/>
            <person name="Kohara Y."/>
            <person name="Kobayashi M."/>
            <person name="Toyoda A."/>
            <person name="Sakaki Y."/>
            <person name="Sakurai T."/>
            <person name="Iida K."/>
            <person name="Akiyama K."/>
            <person name="Satou M."/>
            <person name="Toyoda T."/>
            <person name="Konagaya A."/>
            <person name="Carninci P."/>
            <person name="Kawai J."/>
            <person name="Hayashizaki Y."/>
            <person name="Shinozaki K."/>
        </authorList>
    </citation>
    <scope>NUCLEOTIDE SEQUENCE [LARGE SCALE MRNA] OF 707-1030</scope>
    <source>
        <strain>cv. Columbia</strain>
    </source>
</reference>
<reference key="5">
    <citation type="journal article" date="2008" name="Plant Mol. Biol.">
        <title>The genetic locus At1g73660 encodes a putative MAPKKK and negatively regulates salt tolerance in Arabidopsis.</title>
        <authorList>
            <person name="Gao L."/>
            <person name="Xiang C.B."/>
        </authorList>
    </citation>
    <scope>FUNCTION</scope>
    <scope>TISSUE SPECIFICITY</scope>
    <scope>INDUCTION</scope>
    <scope>DISRUPTION PHENOTYPE</scope>
</reference>
<reference key="6">
    <citation type="journal article" date="2009" name="Plant Physiol.">
        <title>Large-scale Arabidopsis phosphoproteome profiling reveals novel chloroplast kinase substrates and phosphorylation networks.</title>
        <authorList>
            <person name="Reiland S."/>
            <person name="Messerli G."/>
            <person name="Baerenfaller K."/>
            <person name="Gerrits B."/>
            <person name="Endler A."/>
            <person name="Grossmann J."/>
            <person name="Gruissem W."/>
            <person name="Baginsky S."/>
        </authorList>
    </citation>
    <scope>IDENTIFICATION BY MASS SPECTROMETRY [LARGE SCALE ANALYSIS]</scope>
</reference>
<reference key="7">
    <citation type="journal article" date="2014" name="Plant J.">
        <title>SIS8, a putative mitogen-activated protein kinase kinase kinase, regulates sugar-resistant seedling development in Arabidopsis.</title>
        <authorList>
            <person name="Huang Y."/>
            <person name="Li C.Y."/>
            <person name="Qi Y."/>
            <person name="Park S."/>
            <person name="Gibson S.I."/>
        </authorList>
    </citation>
    <scope>FUNCTION</scope>
    <scope>INTERACTION WITH UGT72E1</scope>
    <scope>SUBCELLULAR LOCATION</scope>
</reference>
<feature type="chain" id="PRO_0000440871" description="Probable serine/threonine-protein kinase SIS8">
    <location>
        <begin position="1"/>
        <end position="1030"/>
    </location>
</feature>
<feature type="domain" description="Protein kinase" evidence="1">
    <location>
        <begin position="748"/>
        <end position="1003"/>
    </location>
</feature>
<feature type="region of interest" description="Disordered" evidence="2">
    <location>
        <begin position="44"/>
        <end position="84"/>
    </location>
</feature>
<feature type="region of interest" description="Disordered" evidence="2">
    <location>
        <begin position="399"/>
        <end position="474"/>
    </location>
</feature>
<feature type="region of interest" description="Disordered" evidence="2">
    <location>
        <begin position="555"/>
        <end position="625"/>
    </location>
</feature>
<feature type="region of interest" description="Disordered" evidence="2">
    <location>
        <begin position="689"/>
        <end position="736"/>
    </location>
</feature>
<feature type="region of interest" description="Disordered" evidence="2">
    <location>
        <begin position="1007"/>
        <end position="1030"/>
    </location>
</feature>
<feature type="compositionally biased region" description="Polar residues" evidence="2">
    <location>
        <begin position="44"/>
        <end position="58"/>
    </location>
</feature>
<feature type="compositionally biased region" description="Polar residues" evidence="2">
    <location>
        <begin position="399"/>
        <end position="419"/>
    </location>
</feature>
<feature type="compositionally biased region" description="Basic and acidic residues" evidence="2">
    <location>
        <begin position="426"/>
        <end position="435"/>
    </location>
</feature>
<feature type="compositionally biased region" description="Basic and acidic residues" evidence="2">
    <location>
        <begin position="458"/>
        <end position="471"/>
    </location>
</feature>
<feature type="compositionally biased region" description="Basic and acidic residues" evidence="2">
    <location>
        <begin position="560"/>
        <end position="580"/>
    </location>
</feature>
<feature type="compositionally biased region" description="Low complexity" evidence="2">
    <location>
        <begin position="613"/>
        <end position="625"/>
    </location>
</feature>
<feature type="compositionally biased region" description="Polar residues" evidence="2">
    <location>
        <begin position="1007"/>
        <end position="1023"/>
    </location>
</feature>
<feature type="active site" description="Proton acceptor" evidence="1">
    <location>
        <position position="871"/>
    </location>
</feature>
<feature type="binding site" evidence="1">
    <location>
        <begin position="754"/>
        <end position="762"/>
    </location>
    <ligand>
        <name>ATP</name>
        <dbReference type="ChEBI" id="CHEBI:30616"/>
    </ligand>
</feature>
<feature type="binding site" evidence="1">
    <location>
        <position position="775"/>
    </location>
    <ligand>
        <name>ATP</name>
        <dbReference type="ChEBI" id="CHEBI:30616"/>
    </ligand>
</feature>
<feature type="sequence conflict" description="In Ref. 3; AAM20478." evidence="7" ref="3">
    <original>S</original>
    <variation>T</variation>
    <location>
        <position position="103"/>
    </location>
</feature>
<organism>
    <name type="scientific">Arabidopsis thaliana</name>
    <name type="common">Mouse-ear cress</name>
    <dbReference type="NCBI Taxonomy" id="3702"/>
    <lineage>
        <taxon>Eukaryota</taxon>
        <taxon>Viridiplantae</taxon>
        <taxon>Streptophyta</taxon>
        <taxon>Embryophyta</taxon>
        <taxon>Tracheophyta</taxon>
        <taxon>Spermatophyta</taxon>
        <taxon>Magnoliopsida</taxon>
        <taxon>eudicotyledons</taxon>
        <taxon>Gunneridae</taxon>
        <taxon>Pentapetalae</taxon>
        <taxon>rosids</taxon>
        <taxon>malvids</taxon>
        <taxon>Brassicales</taxon>
        <taxon>Brassicaceae</taxon>
        <taxon>Camelineae</taxon>
        <taxon>Arabidopsis</taxon>
    </lineage>
</organism>
<dbReference type="EC" id="2.7.11.1" evidence="7"/>
<dbReference type="EMBL" id="AC012679">
    <property type="protein sequence ID" value="AAG52069.1"/>
    <property type="molecule type" value="Genomic_DNA"/>
</dbReference>
<dbReference type="EMBL" id="CP002684">
    <property type="protein sequence ID" value="AEE35494.1"/>
    <property type="molecule type" value="Genomic_DNA"/>
</dbReference>
<dbReference type="EMBL" id="AY099627">
    <property type="protein sequence ID" value="AAM20478.1"/>
    <property type="molecule type" value="mRNA"/>
</dbReference>
<dbReference type="EMBL" id="AK229991">
    <property type="protein sequence ID" value="BAF01815.1"/>
    <property type="molecule type" value="mRNA"/>
</dbReference>
<dbReference type="PIR" id="F96763">
    <property type="entry name" value="F96763"/>
</dbReference>
<dbReference type="RefSeq" id="NP_177507.1">
    <property type="nucleotide sequence ID" value="NM_106025.4"/>
</dbReference>
<dbReference type="SMR" id="Q9C9U5"/>
<dbReference type="FunCoup" id="Q9C9U5">
    <property type="interactions" value="189"/>
</dbReference>
<dbReference type="STRING" id="3702.Q9C9U5"/>
<dbReference type="iPTMnet" id="Q9C9U5"/>
<dbReference type="PaxDb" id="3702-AT1G73660.1"/>
<dbReference type="ProteomicsDB" id="234568"/>
<dbReference type="EnsemblPlants" id="AT1G73660.1">
    <property type="protein sequence ID" value="AT1G73660.1"/>
    <property type="gene ID" value="AT1G73660"/>
</dbReference>
<dbReference type="GeneID" id="843701"/>
<dbReference type="Gramene" id="AT1G73660.1">
    <property type="protein sequence ID" value="AT1G73660.1"/>
    <property type="gene ID" value="AT1G73660"/>
</dbReference>
<dbReference type="KEGG" id="ath:AT1G73660"/>
<dbReference type="Araport" id="AT1G73660"/>
<dbReference type="TAIR" id="AT1G73660">
    <property type="gene designation" value="SIS8"/>
</dbReference>
<dbReference type="eggNOG" id="KOG0192">
    <property type="taxonomic scope" value="Eukaryota"/>
</dbReference>
<dbReference type="HOGENOM" id="CLU_006806_1_0_1"/>
<dbReference type="InParanoid" id="Q9C9U5"/>
<dbReference type="OMA" id="VIHESRN"/>
<dbReference type="PhylomeDB" id="Q9C9U5"/>
<dbReference type="PRO" id="PR:Q9C9U5"/>
<dbReference type="Proteomes" id="UP000006548">
    <property type="component" value="Chromosome 1"/>
</dbReference>
<dbReference type="ExpressionAtlas" id="Q9C9U5">
    <property type="expression patterns" value="baseline and differential"/>
</dbReference>
<dbReference type="GO" id="GO:0005739">
    <property type="term" value="C:mitochondrion"/>
    <property type="evidence" value="ECO:0007005"/>
    <property type="project" value="TAIR"/>
</dbReference>
<dbReference type="GO" id="GO:0005634">
    <property type="term" value="C:nucleus"/>
    <property type="evidence" value="ECO:0000314"/>
    <property type="project" value="TAIR"/>
</dbReference>
<dbReference type="GO" id="GO:0005524">
    <property type="term" value="F:ATP binding"/>
    <property type="evidence" value="ECO:0007669"/>
    <property type="project" value="UniProtKB-KW"/>
</dbReference>
<dbReference type="GO" id="GO:0106310">
    <property type="term" value="F:protein serine kinase activity"/>
    <property type="evidence" value="ECO:0007669"/>
    <property type="project" value="RHEA"/>
</dbReference>
<dbReference type="GO" id="GO:0004674">
    <property type="term" value="F:protein serine/threonine kinase activity"/>
    <property type="evidence" value="ECO:0007669"/>
    <property type="project" value="UniProtKB-KW"/>
</dbReference>
<dbReference type="GO" id="GO:0004712">
    <property type="term" value="F:protein serine/threonine/tyrosine kinase activity"/>
    <property type="evidence" value="ECO:0000250"/>
    <property type="project" value="TAIR"/>
</dbReference>
<dbReference type="GO" id="GO:0009651">
    <property type="term" value="P:response to salt stress"/>
    <property type="evidence" value="ECO:0000315"/>
    <property type="project" value="TAIR"/>
</dbReference>
<dbReference type="GO" id="GO:0010182">
    <property type="term" value="P:sugar mediated signaling pathway"/>
    <property type="evidence" value="ECO:0000315"/>
    <property type="project" value="TAIR"/>
</dbReference>
<dbReference type="CDD" id="cd13999">
    <property type="entry name" value="STKc_MAP3K-like"/>
    <property type="match status" value="1"/>
</dbReference>
<dbReference type="FunFam" id="1.10.510.10:FF:000193">
    <property type="entry name" value="Serine/threonine-protein kinase CTR1"/>
    <property type="match status" value="1"/>
</dbReference>
<dbReference type="FunFam" id="3.30.200.20:FF:000060">
    <property type="entry name" value="Serine/threonine-protein kinase isoform 1"/>
    <property type="match status" value="1"/>
</dbReference>
<dbReference type="Gene3D" id="3.30.200.20">
    <property type="entry name" value="Phosphorylase Kinase, domain 1"/>
    <property type="match status" value="1"/>
</dbReference>
<dbReference type="Gene3D" id="1.10.510.10">
    <property type="entry name" value="Transferase(Phosphotransferase) domain 1"/>
    <property type="match status" value="1"/>
</dbReference>
<dbReference type="InterPro" id="IPR055164">
    <property type="entry name" value="EDR1/CTR1/ARMC3-like_pept-like"/>
</dbReference>
<dbReference type="InterPro" id="IPR011009">
    <property type="entry name" value="Kinase-like_dom_sf"/>
</dbReference>
<dbReference type="InterPro" id="IPR000719">
    <property type="entry name" value="Prot_kinase_dom"/>
</dbReference>
<dbReference type="InterPro" id="IPR017441">
    <property type="entry name" value="Protein_kinase_ATP_BS"/>
</dbReference>
<dbReference type="InterPro" id="IPR001245">
    <property type="entry name" value="Ser-Thr/Tyr_kinase_cat_dom"/>
</dbReference>
<dbReference type="InterPro" id="IPR008271">
    <property type="entry name" value="Ser/Thr_kinase_AS"/>
</dbReference>
<dbReference type="InterPro" id="IPR051681">
    <property type="entry name" value="Ser/Thr_Kinases-Pseudokinases"/>
</dbReference>
<dbReference type="InterPro" id="IPR003903">
    <property type="entry name" value="UIM_dom"/>
</dbReference>
<dbReference type="PANTHER" id="PTHR44329">
    <property type="entry name" value="SERINE/THREONINE-PROTEIN KINASE TNNI3K-RELATED"/>
    <property type="match status" value="1"/>
</dbReference>
<dbReference type="PANTHER" id="PTHR44329:SF146">
    <property type="entry name" value="SERINE_THREONINE-PROTEIN KINASE SIS8-RELATED"/>
    <property type="match status" value="1"/>
</dbReference>
<dbReference type="Pfam" id="PF14381">
    <property type="entry name" value="EDR1_CTR1_ARMC3_pept"/>
    <property type="match status" value="1"/>
</dbReference>
<dbReference type="Pfam" id="PF07714">
    <property type="entry name" value="PK_Tyr_Ser-Thr"/>
    <property type="match status" value="1"/>
</dbReference>
<dbReference type="PRINTS" id="PR00109">
    <property type="entry name" value="TYRKINASE"/>
</dbReference>
<dbReference type="SMART" id="SM00220">
    <property type="entry name" value="S_TKc"/>
    <property type="match status" value="1"/>
</dbReference>
<dbReference type="SUPFAM" id="SSF56112">
    <property type="entry name" value="Protein kinase-like (PK-like)"/>
    <property type="match status" value="1"/>
</dbReference>
<dbReference type="PROSITE" id="PS00107">
    <property type="entry name" value="PROTEIN_KINASE_ATP"/>
    <property type="match status" value="1"/>
</dbReference>
<dbReference type="PROSITE" id="PS50011">
    <property type="entry name" value="PROTEIN_KINASE_DOM"/>
    <property type="match status" value="1"/>
</dbReference>
<dbReference type="PROSITE" id="PS00108">
    <property type="entry name" value="PROTEIN_KINASE_ST"/>
    <property type="match status" value="1"/>
</dbReference>
<gene>
    <name evidence="6" type="primary">SIS8</name>
    <name evidence="5" type="synonym">AT6</name>
    <name evidence="8" type="ordered locus">At1g73660</name>
    <name evidence="9" type="ORF">F25P22.8</name>
</gene>
<accession>Q9C9U5</accession>
<accession>Q0WM41</accession>
<accession>Q8L625</accession>
<sequence>MKVKEETLKNLGDGVVLRPVDHCSSIWSMKMNMKNFLKKLHISPNQSDEAEGSISTTKSNHHKSIDVSSSSSPRSHHSNSPEIKPFSGLSNWLSSVGHRKIPSPPNSFNAKNRAATVDDTVVVNGSEHVDLGSKDPAVEEENQIQLALELSAREDPEATQIEAIKQFSLGSCAPENSPAELIAYRYWNYNCLGYDDKILDGFYDLYGVLNASSAERIPPLLDLQGTPVSDGVTWEAVLVNRSGDSNLLRLEQMALDIAAKSRSVSSSGFVNSELVRKLAILVGDYMGGPVVHPESMLRAWRSLSYSLKATLGSMVLPLGSLTIGLARHRALLFKVLCDSVGVPCRIVKGQQYTGSEDVAMNFIKADDGREYIVDLMGDPGTLIPADAAGLQIDYDESAYSASPGDNDSIHVASSSNGIESSYEENTEFRTGEHRSSTKSSGERNQSGGGGDLIVHPNISREDVKNQKKVEKAPFQNLSSRPIHSFTHMRSPSWTEGVSSPAAQRMKVKDVSQYMIDAAKENPRLAQKLHDVLLESGVVAPPNLFSEVYPQQLEATVESKNSTEAKKERGKDLETTQEGRHQNGFGPVRFLPPLPRVQSKTNAHDQRDNGKVVSQSDSSHSEASSTEYARTVPAAVAAAAVVASSMVAAAAAKSANSDSSPIELPAAAAATATAAAVVATAAAVSRQLELGSNSDGDDGSGGHEPQGSGDSNHGPNSGGERISDKSIGNESSKSDCDDVSDCEILWEEITVGERIGLGSYGEVYRGDWHGTEVAVKKFLDQDLTGEALEEFRSEVRIMKKLRHPNIVLFMGAVTRPPNLSIVTEFLPRGSLYRLIHRPNNQLDERRRLRMALDAARGMNYLHSCNPMIVHRDLKSPNLLVDKNWVVKVCDFGLSRMKHSTYLSSKSTAGTAEWMAPEVLRNEPADEKCDVYSYGVILWELFTLQQPWGKMNPMQVVGAVGFQHRRLDIPDFVDPAIADLISKCWQTDSKLRPSFAEIMASLKRLQKPVTGSNIPRPVPSSSSLPTEHEQKD</sequence>
<keyword id="KW-0067">ATP-binding</keyword>
<keyword id="KW-0418">Kinase</keyword>
<keyword id="KW-0547">Nucleotide-binding</keyword>
<keyword id="KW-0539">Nucleus</keyword>
<keyword id="KW-1185">Reference proteome</keyword>
<keyword id="KW-0723">Serine/threonine-protein kinase</keyword>
<keyword id="KW-0346">Stress response</keyword>
<keyword id="KW-0808">Transferase</keyword>